<gene>
    <name evidence="1" type="primary">astD</name>
    <name type="ordered locus">BTH_I1778</name>
</gene>
<name>ASTD_BURTA</name>
<keyword id="KW-0002">3D-structure</keyword>
<keyword id="KW-0056">Arginine metabolism</keyword>
<keyword id="KW-0520">NAD</keyword>
<keyword id="KW-0560">Oxidoreductase</keyword>
<proteinExistence type="evidence at protein level"/>
<evidence type="ECO:0000255" key="1">
    <source>
        <dbReference type="HAMAP-Rule" id="MF_01174"/>
    </source>
</evidence>
<evidence type="ECO:0007829" key="2">
    <source>
        <dbReference type="PDB" id="4KNA"/>
    </source>
</evidence>
<accession>Q2SXN9</accession>
<protein>
    <recommendedName>
        <fullName evidence="1">N-succinylglutamate 5-semialdehyde dehydrogenase</fullName>
        <ecNumber evidence="1">1.2.1.71</ecNumber>
    </recommendedName>
    <alternativeName>
        <fullName evidence="1">Succinylglutamic semialdehyde dehydrogenase</fullName>
        <shortName evidence="1">SGSD</shortName>
    </alternativeName>
</protein>
<reference key="1">
    <citation type="journal article" date="2005" name="BMC Genomics">
        <title>Bacterial genome adaptation to niches: divergence of the potential virulence genes in three Burkholderia species of different survival strategies.</title>
        <authorList>
            <person name="Kim H.S."/>
            <person name="Schell M.A."/>
            <person name="Yu Y."/>
            <person name="Ulrich R.L."/>
            <person name="Sarria S.H."/>
            <person name="Nierman W.C."/>
            <person name="DeShazer D."/>
        </authorList>
    </citation>
    <scope>NUCLEOTIDE SEQUENCE [LARGE SCALE GENOMIC DNA]</scope>
    <source>
        <strain>ATCC 700388 / DSM 13276 / CCUG 48851 / CIP 106301 / E264</strain>
    </source>
</reference>
<organism>
    <name type="scientific">Burkholderia thailandensis (strain ATCC 700388 / DSM 13276 / CCUG 48851 / CIP 106301 / E264)</name>
    <dbReference type="NCBI Taxonomy" id="271848"/>
    <lineage>
        <taxon>Bacteria</taxon>
        <taxon>Pseudomonadati</taxon>
        <taxon>Pseudomonadota</taxon>
        <taxon>Betaproteobacteria</taxon>
        <taxon>Burkholderiales</taxon>
        <taxon>Burkholderiaceae</taxon>
        <taxon>Burkholderia</taxon>
        <taxon>pseudomallei group</taxon>
    </lineage>
</organism>
<sequence>MTELFIDGAWVDGAGPVFASRNPGTNERVWEGASASADDVERAVASARRAFAAWSALDLDARCTIVKRFAALLVERKEALATMIGRETGKPLWEARTEVASMAAKVDISITAYHERTGEKRAPMADGVAVLRHRPHGVVAVFGPYNFPGHLPNGHIVPALIAGNTVVFKPSELAPGVARATVEIWRDAGLPAGVLNLVQGEKDTGVALANHRQIDGLFFTGSSDTGTLLHKQFGGRPEIVLALEMGGNNPLVVAEVEDIDAAVHHAIQSAFLSAGQRCTCARRILVPRGAFGDRFVARLADVASKITASVFDADPQPFMGAVISARAASRLVAAQARLVGLGASPIIEMKQRDPALGFVNAAILDVTNVRELPDEEHFGPLAQIVRYTDLDDAIARANDTAFGLSAGLLADDEQAWHTFRRAIRAGIVNWNRPTNGASSAAPFGGAGRSGNHRPSAYYAADYCAYPMASVESAQLQMPASLSPGLHF</sequence>
<dbReference type="EC" id="1.2.1.71" evidence="1"/>
<dbReference type="EMBL" id="CP000086">
    <property type="protein sequence ID" value="ABC38809.1"/>
    <property type="molecule type" value="Genomic_DNA"/>
</dbReference>
<dbReference type="RefSeq" id="WP_009890066.1">
    <property type="nucleotide sequence ID" value="NZ_CP008785.1"/>
</dbReference>
<dbReference type="PDB" id="4KNA">
    <property type="method" value="X-ray"/>
    <property type="resolution" value="1.95 A"/>
    <property type="chains" value="A/B=1-487"/>
</dbReference>
<dbReference type="PDBsum" id="4KNA"/>
<dbReference type="SMR" id="Q2SXN9"/>
<dbReference type="GeneID" id="45121507"/>
<dbReference type="KEGG" id="bte:BTH_I1778"/>
<dbReference type="HOGENOM" id="CLU_005391_1_0_4"/>
<dbReference type="UniPathway" id="UPA00185">
    <property type="reaction ID" value="UER00282"/>
</dbReference>
<dbReference type="EvolutionaryTrace" id="Q2SXN9"/>
<dbReference type="Proteomes" id="UP000001930">
    <property type="component" value="Chromosome I"/>
</dbReference>
<dbReference type="GO" id="GO:0043824">
    <property type="term" value="F:succinylglutamate-semialdehyde dehydrogenase activity"/>
    <property type="evidence" value="ECO:0007669"/>
    <property type="project" value="UniProtKB-EC"/>
</dbReference>
<dbReference type="GO" id="GO:0019544">
    <property type="term" value="P:arginine catabolic process to glutamate"/>
    <property type="evidence" value="ECO:0007669"/>
    <property type="project" value="UniProtKB-UniRule"/>
</dbReference>
<dbReference type="GO" id="GO:0019545">
    <property type="term" value="P:arginine catabolic process to succinate"/>
    <property type="evidence" value="ECO:0007669"/>
    <property type="project" value="UniProtKB-UniRule"/>
</dbReference>
<dbReference type="CDD" id="cd07095">
    <property type="entry name" value="ALDH_SGSD_AstD"/>
    <property type="match status" value="1"/>
</dbReference>
<dbReference type="FunFam" id="3.40.605.10:FF:000010">
    <property type="entry name" value="N-succinylglutamate 5-semialdehyde dehydrogenase"/>
    <property type="match status" value="1"/>
</dbReference>
<dbReference type="Gene3D" id="3.40.605.10">
    <property type="entry name" value="Aldehyde Dehydrogenase, Chain A, domain 1"/>
    <property type="match status" value="1"/>
</dbReference>
<dbReference type="Gene3D" id="3.40.309.10">
    <property type="entry name" value="Aldehyde Dehydrogenase, Chain A, domain 2"/>
    <property type="match status" value="1"/>
</dbReference>
<dbReference type="HAMAP" id="MF_01174">
    <property type="entry name" value="Aldedh_AstD"/>
    <property type="match status" value="1"/>
</dbReference>
<dbReference type="InterPro" id="IPR016161">
    <property type="entry name" value="Ald_DH/histidinol_DH"/>
</dbReference>
<dbReference type="InterPro" id="IPR016163">
    <property type="entry name" value="Ald_DH_C"/>
</dbReference>
<dbReference type="InterPro" id="IPR016160">
    <property type="entry name" value="Ald_DH_CS_CYS"/>
</dbReference>
<dbReference type="InterPro" id="IPR029510">
    <property type="entry name" value="Ald_DH_CS_GLU"/>
</dbReference>
<dbReference type="InterPro" id="IPR016162">
    <property type="entry name" value="Ald_DH_N"/>
</dbReference>
<dbReference type="InterPro" id="IPR015590">
    <property type="entry name" value="Aldehyde_DH_dom"/>
</dbReference>
<dbReference type="InterPro" id="IPR017649">
    <property type="entry name" value="SuccinylGlu_semiald_DH_AstD"/>
</dbReference>
<dbReference type="NCBIfam" id="TIGR03240">
    <property type="entry name" value="arg_catab_astD"/>
    <property type="match status" value="1"/>
</dbReference>
<dbReference type="NCBIfam" id="NF006992">
    <property type="entry name" value="PRK09457.1"/>
    <property type="match status" value="1"/>
</dbReference>
<dbReference type="PANTHER" id="PTHR11699">
    <property type="entry name" value="ALDEHYDE DEHYDROGENASE-RELATED"/>
    <property type="match status" value="1"/>
</dbReference>
<dbReference type="Pfam" id="PF00171">
    <property type="entry name" value="Aldedh"/>
    <property type="match status" value="1"/>
</dbReference>
<dbReference type="SUPFAM" id="SSF53720">
    <property type="entry name" value="ALDH-like"/>
    <property type="match status" value="1"/>
</dbReference>
<dbReference type="PROSITE" id="PS00070">
    <property type="entry name" value="ALDEHYDE_DEHYDR_CYS"/>
    <property type="match status" value="1"/>
</dbReference>
<dbReference type="PROSITE" id="PS00687">
    <property type="entry name" value="ALDEHYDE_DEHYDR_GLU"/>
    <property type="match status" value="1"/>
</dbReference>
<comment type="function">
    <text evidence="1">Catalyzes the NAD-dependent reduction of succinylglutamate semialdehyde into succinylglutamate.</text>
</comment>
<comment type="catalytic activity">
    <reaction evidence="1">
        <text>N-succinyl-L-glutamate 5-semialdehyde + NAD(+) + H2O = N-succinyl-L-glutamate + NADH + 2 H(+)</text>
        <dbReference type="Rhea" id="RHEA:10812"/>
        <dbReference type="ChEBI" id="CHEBI:15377"/>
        <dbReference type="ChEBI" id="CHEBI:15378"/>
        <dbReference type="ChEBI" id="CHEBI:57540"/>
        <dbReference type="ChEBI" id="CHEBI:57945"/>
        <dbReference type="ChEBI" id="CHEBI:58520"/>
        <dbReference type="ChEBI" id="CHEBI:58763"/>
        <dbReference type="EC" id="1.2.1.71"/>
    </reaction>
</comment>
<comment type="pathway">
    <text evidence="1">Amino-acid degradation; L-arginine degradation via AST pathway; L-glutamate and succinate from L-arginine: step 4/5.</text>
</comment>
<comment type="similarity">
    <text evidence="1">Belongs to the aldehyde dehydrogenase family. AstD subfamily.</text>
</comment>
<feature type="chain" id="PRO_0000262392" description="N-succinylglutamate 5-semialdehyde dehydrogenase">
    <location>
        <begin position="1"/>
        <end position="487"/>
    </location>
</feature>
<feature type="active site" evidence="1">
    <location>
        <position position="244"/>
    </location>
</feature>
<feature type="active site" evidence="1">
    <location>
        <position position="278"/>
    </location>
</feature>
<feature type="binding site" evidence="1">
    <location>
        <begin position="221"/>
        <end position="226"/>
    </location>
    <ligand>
        <name>NAD(+)</name>
        <dbReference type="ChEBI" id="CHEBI:57540"/>
    </ligand>
</feature>
<feature type="strand" evidence="2">
    <location>
        <begin position="4"/>
        <end position="6"/>
    </location>
</feature>
<feature type="strand" evidence="2">
    <location>
        <begin position="9"/>
        <end position="11"/>
    </location>
</feature>
<feature type="strand" evidence="2">
    <location>
        <begin position="17"/>
        <end position="21"/>
    </location>
</feature>
<feature type="turn" evidence="2">
    <location>
        <begin position="23"/>
        <end position="25"/>
    </location>
</feature>
<feature type="strand" evidence="2">
    <location>
        <begin position="28"/>
        <end position="33"/>
    </location>
</feature>
<feature type="helix" evidence="2">
    <location>
        <begin position="37"/>
        <end position="56"/>
    </location>
</feature>
<feature type="helix" evidence="2">
    <location>
        <begin position="59"/>
        <end position="75"/>
    </location>
</feature>
<feature type="helix" evidence="2">
    <location>
        <begin position="77"/>
        <end position="88"/>
    </location>
</feature>
<feature type="helix" evidence="2">
    <location>
        <begin position="92"/>
        <end position="116"/>
    </location>
</feature>
<feature type="strand" evidence="2">
    <location>
        <begin position="120"/>
        <end position="124"/>
    </location>
</feature>
<feature type="strand" evidence="2">
    <location>
        <begin position="127"/>
        <end position="135"/>
    </location>
</feature>
<feature type="strand" evidence="2">
    <location>
        <begin position="137"/>
        <end position="142"/>
    </location>
</feature>
<feature type="strand" evidence="2">
    <location>
        <begin position="145"/>
        <end position="147"/>
    </location>
</feature>
<feature type="helix" evidence="2">
    <location>
        <begin position="150"/>
        <end position="162"/>
    </location>
</feature>
<feature type="strand" evidence="2">
    <location>
        <begin position="165"/>
        <end position="169"/>
    </location>
</feature>
<feature type="helix" evidence="2">
    <location>
        <begin position="175"/>
        <end position="187"/>
    </location>
</feature>
<feature type="strand" evidence="2">
    <location>
        <begin position="194"/>
        <end position="197"/>
    </location>
</feature>
<feature type="helix" evidence="2">
    <location>
        <begin position="202"/>
        <end position="209"/>
    </location>
</feature>
<feature type="strand" evidence="2">
    <location>
        <begin position="215"/>
        <end position="221"/>
    </location>
</feature>
<feature type="helix" evidence="2">
    <location>
        <begin position="223"/>
        <end position="232"/>
    </location>
</feature>
<feature type="turn" evidence="2">
    <location>
        <begin position="233"/>
        <end position="235"/>
    </location>
</feature>
<feature type="strand" evidence="2">
    <location>
        <begin position="239"/>
        <end position="244"/>
    </location>
</feature>
<feature type="strand" evidence="2">
    <location>
        <begin position="249"/>
        <end position="253"/>
    </location>
</feature>
<feature type="helix" evidence="2">
    <location>
        <begin position="259"/>
        <end position="271"/>
    </location>
</feature>
<feature type="helix" evidence="2">
    <location>
        <begin position="272"/>
        <end position="275"/>
    </location>
</feature>
<feature type="strand" evidence="2">
    <location>
        <begin position="281"/>
        <end position="289"/>
    </location>
</feature>
<feature type="helix" evidence="2">
    <location>
        <begin position="290"/>
        <end position="304"/>
    </location>
</feature>
<feature type="helix" evidence="2">
    <location>
        <begin position="325"/>
        <end position="340"/>
    </location>
</feature>
<feature type="strand" evidence="2">
    <location>
        <begin position="344"/>
        <end position="347"/>
    </location>
</feature>
<feature type="strand" evidence="2">
    <location>
        <begin position="362"/>
        <end position="365"/>
    </location>
</feature>
<feature type="strand" evidence="2">
    <location>
        <begin position="379"/>
        <end position="389"/>
    </location>
</feature>
<feature type="helix" evidence="2">
    <location>
        <begin position="390"/>
        <end position="397"/>
    </location>
</feature>
<feature type="strand" evidence="2">
    <location>
        <begin position="404"/>
        <end position="409"/>
    </location>
</feature>
<feature type="helix" evidence="2">
    <location>
        <begin position="413"/>
        <end position="422"/>
    </location>
</feature>
<feature type="strand" evidence="2">
    <location>
        <begin position="426"/>
        <end position="432"/>
    </location>
</feature>
<feature type="strand" evidence="2">
    <location>
        <begin position="441"/>
        <end position="443"/>
    </location>
</feature>
<feature type="helix" evidence="2">
    <location>
        <begin position="447"/>
        <end position="449"/>
    </location>
</feature>
<feature type="helix" evidence="2">
    <location>
        <begin position="459"/>
        <end position="463"/>
    </location>
</feature>
<feature type="strand" evidence="2">
    <location>
        <begin position="464"/>
        <end position="471"/>
    </location>
</feature>